<comment type="function">
    <text evidence="1">Probable mitochondrial mRNA stabilization factor.</text>
</comment>
<comment type="subcellular location">
    <subcellularLocation>
        <location evidence="1">Mitochondrion inner membrane</location>
        <topology evidence="1">Peripheral membrane protein</topology>
        <orientation evidence="1">Matrix side</orientation>
    </subcellularLocation>
</comment>
<comment type="similarity">
    <text evidence="4">Belongs to the ATP25 family.</text>
</comment>
<proteinExistence type="inferred from homology"/>
<reference key="1">
    <citation type="journal article" date="2015" name="PLoS Genet.">
        <title>The dynamic genome and transcriptome of the human fungal pathogen Blastomyces and close relative Emmonsia.</title>
        <authorList>
            <person name="Munoz J.F."/>
            <person name="Gauthier G.M."/>
            <person name="Desjardins C.A."/>
            <person name="Gallo J.E."/>
            <person name="Holder J."/>
            <person name="Sullivan T.D."/>
            <person name="Marty A.J."/>
            <person name="Carmen J.C."/>
            <person name="Chen Z."/>
            <person name="Ding L."/>
            <person name="Gujja S."/>
            <person name="Magrini V."/>
            <person name="Misas E."/>
            <person name="Mitreva M."/>
            <person name="Priest M."/>
            <person name="Saif S."/>
            <person name="Whiston E.A."/>
            <person name="Young S."/>
            <person name="Zeng Q."/>
            <person name="Goldman W.E."/>
            <person name="Mardis E.R."/>
            <person name="Taylor J.W."/>
            <person name="McEwen J.G."/>
            <person name="Clay O.K."/>
            <person name="Klein B.S."/>
            <person name="Cuomo C.A."/>
        </authorList>
    </citation>
    <scope>NUCLEOTIDE SEQUENCE [LARGE SCALE GENOMIC DNA]</scope>
    <source>
        <strain>SLH14081</strain>
    </source>
</reference>
<sequence>MRRALLTGIQCHACRNNVVRSFVSVSGVTFMPLASGSWSASQTRPPPLSRNFSSQHAKLFSSHPSDNAEVAVDPMPEKDITEETVKPPEEPEEHIPWYLQEELEATTSHPLRKQQPLPPLPENPPPILNGLLEHISIDLGLDDISLLDLRKLDPPPALGANLIMIFGTARGVKHLNVSADRLCRWLRTTYKLRPDADGLLGRNELKIKLRRKARRAKLAKSAKSTLTAPDDGITTGWICVDVGTVEGGQFRKPEEEARKVGFVGFGTFVQGTRIVVQLMTEEKREEVDLEGLWRRTLERNSLENEGLPQPQAEEPPQEAGDIHKPSSVTPAHISHRVSHAAQISVNYEQRRGISTGSRQNRDLEEDGLNYAPINPDGTIKLPELISESTPLTSLTSRLRNISPYEAIYHLGQDVNDTNSTTFLEQFYRKLSKAPDDLASAQRIKLICIAIMLHHPGYGKTDLFKVTQEHFISNYGVTPPQFLEILDALLSFKPDLTSDPPNLLLPAADMELALQTIDHVGLRGIDLLNSTVWMKLFVGASFRVPVCPVRDLMNAPVIGNRTPVSLDTYETVNRVQTRLLKVKTAAKIELSANEYLSLLRVLFDHEWYSMFWDTWEEIALAGMPRDKSLYVFLFQLHAESDGWEGWKSTLLNCIPMMERENPPVYMDRELAEVIARCLAIAHPEIMDRVERNEPSPLVRLWHRCRIAVEKEVPLRGAQNPPSTMS</sequence>
<feature type="transit peptide" description="Mitochondrion" evidence="2">
    <location>
        <begin position="1"/>
        <end position="52"/>
    </location>
</feature>
<feature type="chain" id="PRO_0000404457" description="ATPase synthesis protein 25, mitochondrial">
    <location>
        <begin position="53"/>
        <end position="724"/>
    </location>
</feature>
<feature type="region of interest" description="Disordered" evidence="3">
    <location>
        <begin position="36"/>
        <end position="76"/>
    </location>
</feature>
<feature type="region of interest" description="Disordered" evidence="3">
    <location>
        <begin position="300"/>
        <end position="323"/>
    </location>
</feature>
<feature type="compositionally biased region" description="Low complexity" evidence="3">
    <location>
        <begin position="308"/>
        <end position="319"/>
    </location>
</feature>
<evidence type="ECO:0000250" key="1"/>
<evidence type="ECO:0000255" key="2"/>
<evidence type="ECO:0000256" key="3">
    <source>
        <dbReference type="SAM" id="MobiDB-lite"/>
    </source>
</evidence>
<evidence type="ECO:0000305" key="4"/>
<organism>
    <name type="scientific">Blastomyces gilchristii (strain SLH14081)</name>
    <name type="common">Blastomyces dermatitidis</name>
    <dbReference type="NCBI Taxonomy" id="559298"/>
    <lineage>
        <taxon>Eukaryota</taxon>
        <taxon>Fungi</taxon>
        <taxon>Dikarya</taxon>
        <taxon>Ascomycota</taxon>
        <taxon>Pezizomycotina</taxon>
        <taxon>Eurotiomycetes</taxon>
        <taxon>Eurotiomycetidae</taxon>
        <taxon>Onygenales</taxon>
        <taxon>Ajellomycetaceae</taxon>
        <taxon>Blastomyces</taxon>
    </lineage>
</organism>
<gene>
    <name type="primary">ATP25</name>
    <name type="ORF">BDBG_02797</name>
</gene>
<keyword id="KW-0472">Membrane</keyword>
<keyword id="KW-0496">Mitochondrion</keyword>
<keyword id="KW-0999">Mitochondrion inner membrane</keyword>
<keyword id="KW-1185">Reference proteome</keyword>
<keyword id="KW-0809">Transit peptide</keyword>
<accession>C5JJY8</accession>
<accession>A0A179UF09</accession>
<name>ATP25_BLAGS</name>
<protein>
    <recommendedName>
        <fullName>ATPase synthesis protein 25, mitochondrial</fullName>
    </recommendedName>
</protein>
<dbReference type="EMBL" id="GG657451">
    <property type="protein sequence ID" value="OAT06615.1"/>
    <property type="molecule type" value="Genomic_DNA"/>
</dbReference>
<dbReference type="RefSeq" id="XP_002626620.1">
    <property type="nucleotide sequence ID" value="XM_002626574.1"/>
</dbReference>
<dbReference type="SMR" id="C5JJY8"/>
<dbReference type="STRING" id="559298.C5JJY8"/>
<dbReference type="GeneID" id="8506042"/>
<dbReference type="KEGG" id="bgh:BDBG_02797"/>
<dbReference type="VEuPathDB" id="FungiDB:BDBG_02797"/>
<dbReference type="HOGENOM" id="CLU_016140_0_0_1"/>
<dbReference type="OrthoDB" id="107372at2759"/>
<dbReference type="Proteomes" id="UP000002038">
    <property type="component" value="Unassembled WGS sequence"/>
</dbReference>
<dbReference type="GO" id="GO:0005743">
    <property type="term" value="C:mitochondrial inner membrane"/>
    <property type="evidence" value="ECO:0007669"/>
    <property type="project" value="UniProtKB-SubCell"/>
</dbReference>
<dbReference type="GO" id="GO:0140053">
    <property type="term" value="P:mitochondrial gene expression"/>
    <property type="evidence" value="ECO:0007669"/>
    <property type="project" value="InterPro"/>
</dbReference>
<dbReference type="GO" id="GO:0048255">
    <property type="term" value="P:mRNA stabilization"/>
    <property type="evidence" value="ECO:0007669"/>
    <property type="project" value="TreeGrafter"/>
</dbReference>
<dbReference type="FunFam" id="3.30.460.10:FF:000044">
    <property type="entry name" value="ATPase synthesis protein 25, mitochondrial"/>
    <property type="match status" value="1"/>
</dbReference>
<dbReference type="Gene3D" id="3.30.460.10">
    <property type="entry name" value="Beta Polymerase, domain 2"/>
    <property type="match status" value="1"/>
</dbReference>
<dbReference type="InterPro" id="IPR040152">
    <property type="entry name" value="Atp25"/>
</dbReference>
<dbReference type="InterPro" id="IPR043519">
    <property type="entry name" value="NT_sf"/>
</dbReference>
<dbReference type="PANTHER" id="PTHR28087">
    <property type="entry name" value="ATPASE SYNTHESIS PROTEIN 25, MITOCHONDRIAL"/>
    <property type="match status" value="1"/>
</dbReference>
<dbReference type="PANTHER" id="PTHR28087:SF1">
    <property type="entry name" value="ATPASE SYNTHESIS PROTEIN 25, MITOCHONDRIAL"/>
    <property type="match status" value="1"/>
</dbReference>